<keyword id="KW-0963">Cytoplasm</keyword>
<keyword id="KW-0227">DNA damage</keyword>
<keyword id="KW-0228">DNA excision</keyword>
<keyword id="KW-0234">DNA repair</keyword>
<keyword id="KW-0267">Excision nuclease</keyword>
<keyword id="KW-1185">Reference proteome</keyword>
<keyword id="KW-0742">SOS response</keyword>
<sequence length="600" mass="69140">MASQLIENKLKLLPEKAGCYLMKDVNGKVIYVGKSKNLKNRVRSYFKSSQEGRRAELVKNIADYDIIVVDSDKEAFLLEVTLIKKYQPYYNVALKSGTGYPYIEITNEKNPQTRLTSIVYKDKGYYFGPYPNVYAASATLKFIQKVFPLRRCSGYTGRPCLYYHMGQCLGSCFKEVPQSEYDEQIKKIKRFLNGDIQEVKKDLTNKMLQASADLEFERAGELRDQLKYIEETVEKQKIISNDHTQRDIFNYYVDRSWISIQVFFLRQAKLLRRESHMFPLTDETDPEDEFMSFIAQFYAQKNRVNPREVLVPKGIDQDELAAAIGIKVRTPQRGQKASLMEMARENAQLKLDDKFRLLELGQRKTKGAQEEIFKALGLPYGSYIESFDHSHIQGADPVSALVVFKDGEPFKTGYRKFKLKGEVEHQNSADEVGNTREVVRRRYSRLLKEHERMPDLILMDGGQIQVEACEDVLRNELNLDIPVAGMVKDDKHRTNHLLYGDPFKGQPFKLIPMDPKSEGFYLMTRIQDEVHRFAITFHRQTHAKNSLVSRLDSIKGIGPKSRTKLLREFGSLKKIKEASIDDLRKAGLTLTQAQAVKISL</sequence>
<feature type="chain" id="PRO_0000264904" description="UvrABC system protein C">
    <location>
        <begin position="1"/>
        <end position="600"/>
    </location>
</feature>
<feature type="domain" description="GIY-YIG" evidence="1">
    <location>
        <begin position="15"/>
        <end position="92"/>
    </location>
</feature>
<feature type="domain" description="UVR" evidence="1">
    <location>
        <begin position="197"/>
        <end position="232"/>
    </location>
</feature>
<protein>
    <recommendedName>
        <fullName evidence="1">UvrABC system protein C</fullName>
        <shortName evidence="1">Protein UvrC</shortName>
    </recommendedName>
    <alternativeName>
        <fullName evidence="1">Excinuclease ABC subunit C</fullName>
    </alternativeName>
</protein>
<comment type="function">
    <text evidence="1">The UvrABC repair system catalyzes the recognition and processing of DNA lesions. UvrC both incises the 5' and 3' sides of the lesion. The N-terminal half is responsible for the 3' incision and the C-terminal half is responsible for the 5' incision.</text>
</comment>
<comment type="subunit">
    <text evidence="1">Interacts with UvrB in an incision complex.</text>
</comment>
<comment type="subcellular location">
    <subcellularLocation>
        <location evidence="1">Cytoplasm</location>
    </subcellularLocation>
</comment>
<comment type="similarity">
    <text evidence="1">Belongs to the UvrC family.</text>
</comment>
<gene>
    <name evidence="1" type="primary">uvrC</name>
    <name type="ordered locus">Ldb0816</name>
</gene>
<organism>
    <name type="scientific">Lactobacillus delbrueckii subsp. bulgaricus (strain ATCC 11842 / DSM 20081 / BCRC 10696 / JCM 1002 / NBRC 13953 / NCIMB 11778 / NCTC 12712 / WDCM 00102 / Lb 14)</name>
    <dbReference type="NCBI Taxonomy" id="390333"/>
    <lineage>
        <taxon>Bacteria</taxon>
        <taxon>Bacillati</taxon>
        <taxon>Bacillota</taxon>
        <taxon>Bacilli</taxon>
        <taxon>Lactobacillales</taxon>
        <taxon>Lactobacillaceae</taxon>
        <taxon>Lactobacillus</taxon>
    </lineage>
</organism>
<dbReference type="EMBL" id="CR954253">
    <property type="protein sequence ID" value="CAI97638.1"/>
    <property type="molecule type" value="Genomic_DNA"/>
</dbReference>
<dbReference type="RefSeq" id="WP_003619779.1">
    <property type="nucleotide sequence ID" value="NZ_JQAV01000019.1"/>
</dbReference>
<dbReference type="SMR" id="Q1GAM4"/>
<dbReference type="STRING" id="390333.Ldb0816"/>
<dbReference type="KEGG" id="ldb:Ldb0816"/>
<dbReference type="PATRIC" id="fig|390333.13.peg.893"/>
<dbReference type="eggNOG" id="COG0322">
    <property type="taxonomic scope" value="Bacteria"/>
</dbReference>
<dbReference type="HOGENOM" id="CLU_014841_3_2_9"/>
<dbReference type="BioCyc" id="LDEL390333:LDB_RS03590-MONOMER"/>
<dbReference type="Proteomes" id="UP000001259">
    <property type="component" value="Chromosome"/>
</dbReference>
<dbReference type="GO" id="GO:0005737">
    <property type="term" value="C:cytoplasm"/>
    <property type="evidence" value="ECO:0007669"/>
    <property type="project" value="UniProtKB-SubCell"/>
</dbReference>
<dbReference type="GO" id="GO:0009380">
    <property type="term" value="C:excinuclease repair complex"/>
    <property type="evidence" value="ECO:0007669"/>
    <property type="project" value="InterPro"/>
</dbReference>
<dbReference type="GO" id="GO:0003677">
    <property type="term" value="F:DNA binding"/>
    <property type="evidence" value="ECO:0007669"/>
    <property type="project" value="UniProtKB-UniRule"/>
</dbReference>
<dbReference type="GO" id="GO:0009381">
    <property type="term" value="F:excinuclease ABC activity"/>
    <property type="evidence" value="ECO:0007669"/>
    <property type="project" value="UniProtKB-UniRule"/>
</dbReference>
<dbReference type="GO" id="GO:0006289">
    <property type="term" value="P:nucleotide-excision repair"/>
    <property type="evidence" value="ECO:0007669"/>
    <property type="project" value="UniProtKB-UniRule"/>
</dbReference>
<dbReference type="GO" id="GO:0009432">
    <property type="term" value="P:SOS response"/>
    <property type="evidence" value="ECO:0007669"/>
    <property type="project" value="UniProtKB-UniRule"/>
</dbReference>
<dbReference type="CDD" id="cd10434">
    <property type="entry name" value="GIY-YIG_UvrC_Cho"/>
    <property type="match status" value="1"/>
</dbReference>
<dbReference type="FunFam" id="3.40.1440.10:FF:000001">
    <property type="entry name" value="UvrABC system protein C"/>
    <property type="match status" value="1"/>
</dbReference>
<dbReference type="Gene3D" id="1.10.150.20">
    <property type="entry name" value="5' to 3' exonuclease, C-terminal subdomain"/>
    <property type="match status" value="1"/>
</dbReference>
<dbReference type="Gene3D" id="3.40.1440.10">
    <property type="entry name" value="GIY-YIG endonuclease"/>
    <property type="match status" value="1"/>
</dbReference>
<dbReference type="Gene3D" id="4.10.860.10">
    <property type="entry name" value="UVR domain"/>
    <property type="match status" value="1"/>
</dbReference>
<dbReference type="Gene3D" id="3.30.420.340">
    <property type="entry name" value="UvrC, RNAse H endonuclease domain"/>
    <property type="match status" value="1"/>
</dbReference>
<dbReference type="HAMAP" id="MF_00203">
    <property type="entry name" value="UvrC"/>
    <property type="match status" value="1"/>
</dbReference>
<dbReference type="InterPro" id="IPR000305">
    <property type="entry name" value="GIY-YIG_endonuc"/>
</dbReference>
<dbReference type="InterPro" id="IPR035901">
    <property type="entry name" value="GIY-YIG_endonuc_sf"/>
</dbReference>
<dbReference type="InterPro" id="IPR047296">
    <property type="entry name" value="GIY-YIG_UvrC_Cho"/>
</dbReference>
<dbReference type="InterPro" id="IPR010994">
    <property type="entry name" value="RuvA_2-like"/>
</dbReference>
<dbReference type="InterPro" id="IPR001943">
    <property type="entry name" value="UVR_dom"/>
</dbReference>
<dbReference type="InterPro" id="IPR036876">
    <property type="entry name" value="UVR_dom_sf"/>
</dbReference>
<dbReference type="InterPro" id="IPR050066">
    <property type="entry name" value="UvrABC_protein_C"/>
</dbReference>
<dbReference type="InterPro" id="IPR004791">
    <property type="entry name" value="UvrC"/>
</dbReference>
<dbReference type="InterPro" id="IPR001162">
    <property type="entry name" value="UvrC_RNase_H_dom"/>
</dbReference>
<dbReference type="InterPro" id="IPR038476">
    <property type="entry name" value="UvrC_RNase_H_dom_sf"/>
</dbReference>
<dbReference type="NCBIfam" id="TIGR00194">
    <property type="entry name" value="uvrC"/>
    <property type="match status" value="1"/>
</dbReference>
<dbReference type="PANTHER" id="PTHR30562:SF1">
    <property type="entry name" value="UVRABC SYSTEM PROTEIN C"/>
    <property type="match status" value="1"/>
</dbReference>
<dbReference type="PANTHER" id="PTHR30562">
    <property type="entry name" value="UVRC/OXIDOREDUCTASE"/>
    <property type="match status" value="1"/>
</dbReference>
<dbReference type="Pfam" id="PF01541">
    <property type="entry name" value="GIY-YIG"/>
    <property type="match status" value="1"/>
</dbReference>
<dbReference type="Pfam" id="PF14520">
    <property type="entry name" value="HHH_5"/>
    <property type="match status" value="1"/>
</dbReference>
<dbReference type="Pfam" id="PF02151">
    <property type="entry name" value="UVR"/>
    <property type="match status" value="1"/>
</dbReference>
<dbReference type="Pfam" id="PF22920">
    <property type="entry name" value="UvrC_RNaseH"/>
    <property type="match status" value="1"/>
</dbReference>
<dbReference type="Pfam" id="PF08459">
    <property type="entry name" value="UvrC_RNaseH_dom"/>
    <property type="match status" value="1"/>
</dbReference>
<dbReference type="SMART" id="SM00465">
    <property type="entry name" value="GIYc"/>
    <property type="match status" value="1"/>
</dbReference>
<dbReference type="SUPFAM" id="SSF46600">
    <property type="entry name" value="C-terminal UvrC-binding domain of UvrB"/>
    <property type="match status" value="1"/>
</dbReference>
<dbReference type="SUPFAM" id="SSF82771">
    <property type="entry name" value="GIY-YIG endonuclease"/>
    <property type="match status" value="1"/>
</dbReference>
<dbReference type="SUPFAM" id="SSF47781">
    <property type="entry name" value="RuvA domain 2-like"/>
    <property type="match status" value="1"/>
</dbReference>
<dbReference type="PROSITE" id="PS50164">
    <property type="entry name" value="GIY_YIG"/>
    <property type="match status" value="1"/>
</dbReference>
<dbReference type="PROSITE" id="PS50151">
    <property type="entry name" value="UVR"/>
    <property type="match status" value="1"/>
</dbReference>
<dbReference type="PROSITE" id="PS50165">
    <property type="entry name" value="UVRC"/>
    <property type="match status" value="1"/>
</dbReference>
<reference key="1">
    <citation type="journal article" date="2006" name="Proc. Natl. Acad. Sci. U.S.A.">
        <title>The complete genome sequence of Lactobacillus bulgaricus reveals extensive and ongoing reductive evolution.</title>
        <authorList>
            <person name="van de Guchte M."/>
            <person name="Penaud S."/>
            <person name="Grimaldi C."/>
            <person name="Barbe V."/>
            <person name="Bryson K."/>
            <person name="Nicolas P."/>
            <person name="Robert C."/>
            <person name="Oztas S."/>
            <person name="Mangenot S."/>
            <person name="Couloux A."/>
            <person name="Loux V."/>
            <person name="Dervyn R."/>
            <person name="Bossy R."/>
            <person name="Bolotin A."/>
            <person name="Batto J.-M."/>
            <person name="Walunas T."/>
            <person name="Gibrat J.-F."/>
            <person name="Bessieres P."/>
            <person name="Weissenbach J."/>
            <person name="Ehrlich S.D."/>
            <person name="Maguin E."/>
        </authorList>
    </citation>
    <scope>NUCLEOTIDE SEQUENCE [LARGE SCALE GENOMIC DNA]</scope>
    <source>
        <strain>ATCC 11842 / DSM 20081 / BCRC 10696 / JCM 1002 / NBRC 13953 / NCIMB 11778 / NCTC 12712 / WDCM 00102 / Lb 14</strain>
    </source>
</reference>
<name>UVRC_LACDA</name>
<accession>Q1GAM4</accession>
<evidence type="ECO:0000255" key="1">
    <source>
        <dbReference type="HAMAP-Rule" id="MF_00203"/>
    </source>
</evidence>
<proteinExistence type="inferred from homology"/>